<evidence type="ECO:0000255" key="1">
    <source>
        <dbReference type="HAMAP-Rule" id="MF_01367"/>
    </source>
</evidence>
<evidence type="ECO:0000305" key="2"/>
<organism>
    <name type="scientific">Koribacter versatilis (strain Ellin345)</name>
    <dbReference type="NCBI Taxonomy" id="204669"/>
    <lineage>
        <taxon>Bacteria</taxon>
        <taxon>Pseudomonadati</taxon>
        <taxon>Acidobacteriota</taxon>
        <taxon>Terriglobia</taxon>
        <taxon>Terriglobales</taxon>
        <taxon>Candidatus Korobacteraceae</taxon>
        <taxon>Candidatus Korobacter</taxon>
    </lineage>
</organism>
<keyword id="KW-1185">Reference proteome</keyword>
<keyword id="KW-0687">Ribonucleoprotein</keyword>
<keyword id="KW-0689">Ribosomal protein</keyword>
<keyword id="KW-0694">RNA-binding</keyword>
<keyword id="KW-0699">rRNA-binding</keyword>
<name>RL14_KORVE</name>
<proteinExistence type="inferred from homology"/>
<accession>Q1ISB2</accession>
<sequence>MAVQMRTMLEVADNSGARKLQMINPLGGGAGHVAHLGDVVTAAVKEASPDGTAKKGTVVKAVIVRTHKEHRRKDGTYIRFDTNAAVLINDTGEPVGTRVFGPVARELREKKFLKIVSLAPEVL</sequence>
<comment type="function">
    <text evidence="1">Binds to 23S rRNA. Forms part of two intersubunit bridges in the 70S ribosome.</text>
</comment>
<comment type="subunit">
    <text evidence="1">Part of the 50S ribosomal subunit. Forms a cluster with proteins L3 and L19. In the 70S ribosome, L14 and L19 interact and together make contacts with the 16S rRNA in bridges B5 and B8.</text>
</comment>
<comment type="similarity">
    <text evidence="1">Belongs to the universal ribosomal protein uL14 family.</text>
</comment>
<gene>
    <name evidence="1" type="primary">rplN</name>
    <name type="ordered locus">Acid345_1236</name>
</gene>
<dbReference type="EMBL" id="CP000360">
    <property type="protein sequence ID" value="ABF40238.1"/>
    <property type="molecule type" value="Genomic_DNA"/>
</dbReference>
<dbReference type="RefSeq" id="WP_011522040.1">
    <property type="nucleotide sequence ID" value="NC_008009.1"/>
</dbReference>
<dbReference type="SMR" id="Q1ISB2"/>
<dbReference type="STRING" id="204669.Acid345_1236"/>
<dbReference type="EnsemblBacteria" id="ABF40238">
    <property type="protein sequence ID" value="ABF40238"/>
    <property type="gene ID" value="Acid345_1236"/>
</dbReference>
<dbReference type="KEGG" id="aba:Acid345_1236"/>
<dbReference type="eggNOG" id="COG0093">
    <property type="taxonomic scope" value="Bacteria"/>
</dbReference>
<dbReference type="HOGENOM" id="CLU_095071_2_1_0"/>
<dbReference type="OrthoDB" id="9806379at2"/>
<dbReference type="Proteomes" id="UP000002432">
    <property type="component" value="Chromosome"/>
</dbReference>
<dbReference type="GO" id="GO:0015934">
    <property type="term" value="C:large ribosomal subunit"/>
    <property type="evidence" value="ECO:0007669"/>
    <property type="project" value="InterPro"/>
</dbReference>
<dbReference type="GO" id="GO:0070180">
    <property type="term" value="F:large ribosomal subunit rRNA binding"/>
    <property type="evidence" value="ECO:0007669"/>
    <property type="project" value="TreeGrafter"/>
</dbReference>
<dbReference type="GO" id="GO:0003735">
    <property type="term" value="F:structural constituent of ribosome"/>
    <property type="evidence" value="ECO:0007669"/>
    <property type="project" value="InterPro"/>
</dbReference>
<dbReference type="GO" id="GO:0006412">
    <property type="term" value="P:translation"/>
    <property type="evidence" value="ECO:0007669"/>
    <property type="project" value="UniProtKB-UniRule"/>
</dbReference>
<dbReference type="CDD" id="cd00337">
    <property type="entry name" value="Ribosomal_uL14"/>
    <property type="match status" value="1"/>
</dbReference>
<dbReference type="Gene3D" id="2.40.150.20">
    <property type="entry name" value="Ribosomal protein L14"/>
    <property type="match status" value="1"/>
</dbReference>
<dbReference type="HAMAP" id="MF_01367">
    <property type="entry name" value="Ribosomal_uL14"/>
    <property type="match status" value="1"/>
</dbReference>
<dbReference type="InterPro" id="IPR000218">
    <property type="entry name" value="Ribosomal_uL14"/>
</dbReference>
<dbReference type="InterPro" id="IPR005745">
    <property type="entry name" value="Ribosomal_uL14_bac-type"/>
</dbReference>
<dbReference type="InterPro" id="IPR019972">
    <property type="entry name" value="Ribosomal_uL14_CS"/>
</dbReference>
<dbReference type="InterPro" id="IPR036853">
    <property type="entry name" value="Ribosomal_uL14_sf"/>
</dbReference>
<dbReference type="NCBIfam" id="TIGR01067">
    <property type="entry name" value="rplN_bact"/>
    <property type="match status" value="1"/>
</dbReference>
<dbReference type="PANTHER" id="PTHR11761">
    <property type="entry name" value="50S/60S RIBOSOMAL PROTEIN L14/L23"/>
    <property type="match status" value="1"/>
</dbReference>
<dbReference type="PANTHER" id="PTHR11761:SF3">
    <property type="entry name" value="LARGE RIBOSOMAL SUBUNIT PROTEIN UL14M"/>
    <property type="match status" value="1"/>
</dbReference>
<dbReference type="Pfam" id="PF00238">
    <property type="entry name" value="Ribosomal_L14"/>
    <property type="match status" value="1"/>
</dbReference>
<dbReference type="SMART" id="SM01374">
    <property type="entry name" value="Ribosomal_L14"/>
    <property type="match status" value="1"/>
</dbReference>
<dbReference type="SUPFAM" id="SSF50193">
    <property type="entry name" value="Ribosomal protein L14"/>
    <property type="match status" value="1"/>
</dbReference>
<dbReference type="PROSITE" id="PS00049">
    <property type="entry name" value="RIBOSOMAL_L14"/>
    <property type="match status" value="1"/>
</dbReference>
<protein>
    <recommendedName>
        <fullName evidence="1">Large ribosomal subunit protein uL14</fullName>
    </recommendedName>
    <alternativeName>
        <fullName evidence="2">50S ribosomal protein L14</fullName>
    </alternativeName>
</protein>
<reference key="1">
    <citation type="journal article" date="2009" name="Appl. Environ. Microbiol.">
        <title>Three genomes from the phylum Acidobacteria provide insight into the lifestyles of these microorganisms in soils.</title>
        <authorList>
            <person name="Ward N.L."/>
            <person name="Challacombe J.F."/>
            <person name="Janssen P.H."/>
            <person name="Henrissat B."/>
            <person name="Coutinho P.M."/>
            <person name="Wu M."/>
            <person name="Xie G."/>
            <person name="Haft D.H."/>
            <person name="Sait M."/>
            <person name="Badger J."/>
            <person name="Barabote R.D."/>
            <person name="Bradley B."/>
            <person name="Brettin T.S."/>
            <person name="Brinkac L.M."/>
            <person name="Bruce D."/>
            <person name="Creasy T."/>
            <person name="Daugherty S.C."/>
            <person name="Davidsen T.M."/>
            <person name="DeBoy R.T."/>
            <person name="Detter J.C."/>
            <person name="Dodson R.J."/>
            <person name="Durkin A.S."/>
            <person name="Ganapathy A."/>
            <person name="Gwinn-Giglio M."/>
            <person name="Han C.S."/>
            <person name="Khouri H."/>
            <person name="Kiss H."/>
            <person name="Kothari S.P."/>
            <person name="Madupu R."/>
            <person name="Nelson K.E."/>
            <person name="Nelson W.C."/>
            <person name="Paulsen I."/>
            <person name="Penn K."/>
            <person name="Ren Q."/>
            <person name="Rosovitz M.J."/>
            <person name="Selengut J.D."/>
            <person name="Shrivastava S."/>
            <person name="Sullivan S.A."/>
            <person name="Tapia R."/>
            <person name="Thompson L.S."/>
            <person name="Watkins K.L."/>
            <person name="Yang Q."/>
            <person name="Yu C."/>
            <person name="Zafar N."/>
            <person name="Zhou L."/>
            <person name="Kuske C.R."/>
        </authorList>
    </citation>
    <scope>NUCLEOTIDE SEQUENCE [LARGE SCALE GENOMIC DNA]</scope>
    <source>
        <strain>Ellin345</strain>
    </source>
</reference>
<feature type="chain" id="PRO_0000266441" description="Large ribosomal subunit protein uL14">
    <location>
        <begin position="1"/>
        <end position="123"/>
    </location>
</feature>